<name>VF357_IIV6</name>
<proteinExistence type="inferred from homology"/>
<organismHost>
    <name type="scientific">Acheta domesticus</name>
    <name type="common">House cricket</name>
    <dbReference type="NCBI Taxonomy" id="6997"/>
</organismHost>
<organismHost>
    <name type="scientific">Chilo suppressalis</name>
    <name type="common">Asiatic rice borer moth</name>
    <dbReference type="NCBI Taxonomy" id="168631"/>
</organismHost>
<organismHost>
    <name type="scientific">Gryllus bimaculatus</name>
    <name type="common">Two-spotted cricket</name>
    <dbReference type="NCBI Taxonomy" id="6999"/>
</organismHost>
<organismHost>
    <name type="scientific">Gryllus campestris</name>
    <dbReference type="NCBI Taxonomy" id="58607"/>
</organismHost>
<organismHost>
    <name type="scientific">Spodoptera frugiperda</name>
    <name type="common">Fall armyworm</name>
    <dbReference type="NCBI Taxonomy" id="7108"/>
</organismHost>
<evidence type="ECO:0000255" key="1"/>
<evidence type="ECO:0000305" key="2"/>
<accession>Q91FG7</accession>
<comment type="similarity">
    <text evidence="2">Belongs to the IIV-6 357R family.</text>
</comment>
<reference key="1">
    <citation type="journal article" date="2001" name="Virology">
        <title>Analysis of the first complete DNA sequence of an invertebrate iridovirus: coding strategy of the genome of Chilo iridescent virus.</title>
        <authorList>
            <person name="Jakob N.J."/>
            <person name="Mueller K."/>
            <person name="Bahr U."/>
            <person name="Darai G."/>
        </authorList>
    </citation>
    <scope>NUCLEOTIDE SEQUENCE [LARGE SCALE GENOMIC DNA]</scope>
</reference>
<reference key="2">
    <citation type="journal article" date="2007" name="Virol. J.">
        <title>Comparative genomic analysis of the family Iridoviridae: re-annotating and defining the core set of iridovirus genes.</title>
        <authorList>
            <person name="Eaton H.E."/>
            <person name="Metcalf J."/>
            <person name="Penny E."/>
            <person name="Tcherepanov V."/>
            <person name="Upton C."/>
            <person name="Brunetti C.R."/>
        </authorList>
    </citation>
    <scope>GENOME REANNOTATION</scope>
</reference>
<keyword id="KW-0325">Glycoprotein</keyword>
<keyword id="KW-1185">Reference proteome</keyword>
<keyword id="KW-0732">Signal</keyword>
<gene>
    <name type="ORF">IIV6-357R</name>
</gene>
<organism>
    <name type="scientific">Invertebrate iridescent virus 6</name>
    <name type="common">IIV-6</name>
    <name type="synonym">Chilo iridescent virus</name>
    <dbReference type="NCBI Taxonomy" id="176652"/>
    <lineage>
        <taxon>Viruses</taxon>
        <taxon>Varidnaviria</taxon>
        <taxon>Bamfordvirae</taxon>
        <taxon>Nucleocytoviricota</taxon>
        <taxon>Megaviricetes</taxon>
        <taxon>Pimascovirales</taxon>
        <taxon>Iridoviridae</taxon>
        <taxon>Betairidovirinae</taxon>
        <taxon>Iridovirus</taxon>
    </lineage>
</organism>
<protein>
    <recommendedName>
        <fullName>Uncharacterized protein 357R</fullName>
    </recommendedName>
</protein>
<feature type="signal peptide" evidence="1">
    <location>
        <begin position="1"/>
        <end position="18"/>
    </location>
</feature>
<feature type="chain" id="PRO_0000377867" description="Uncharacterized protein 357R">
    <location>
        <begin position="19"/>
        <end position="164"/>
    </location>
</feature>
<feature type="glycosylation site" description="N-linked (GlcNAc...) asparagine; by host" evidence="1">
    <location>
        <position position="88"/>
    </location>
</feature>
<sequence length="164" mass="19419">MILILTIIVGFLIYFVTAKRFKLKRLILSICFKTIYNVFKKWWLKFSEEGLKTIVFKRLSKFLKQPYYCNNNVVEYEFHNKKYKLMVNQSLIKKPSYFILNCKEGTGKKEDITLKLQPWIGPEHNFHNTLIKPSDLGYKKLIVVFSIGNKVVVNENDFLPTKLT</sequence>
<dbReference type="EMBL" id="AF303741">
    <property type="protein sequence ID" value="AAK82329.1"/>
    <property type="molecule type" value="Genomic_DNA"/>
</dbReference>
<dbReference type="RefSeq" id="NP_149820.1">
    <property type="nucleotide sequence ID" value="NC_003038.1"/>
</dbReference>
<dbReference type="KEGG" id="vg:1733095"/>
<dbReference type="OrthoDB" id="38177at10239"/>
<dbReference type="Proteomes" id="UP000001359">
    <property type="component" value="Genome"/>
</dbReference>
<dbReference type="InterPro" id="IPR043921">
    <property type="entry name" value="DUF5772"/>
</dbReference>
<dbReference type="Pfam" id="PF19080">
    <property type="entry name" value="DUF5772"/>
    <property type="match status" value="1"/>
</dbReference>